<feature type="chain" id="PRO_1000188187" description="RNA polymerase-associated protein RapA">
    <location>
        <begin position="1"/>
        <end position="968"/>
    </location>
</feature>
<feature type="domain" description="Helicase ATP-binding" evidence="1">
    <location>
        <begin position="164"/>
        <end position="334"/>
    </location>
</feature>
<feature type="domain" description="Helicase C-terminal" evidence="1">
    <location>
        <begin position="490"/>
        <end position="685"/>
    </location>
</feature>
<feature type="short sequence motif" description="DEAH box">
    <location>
        <begin position="280"/>
        <end position="283"/>
    </location>
</feature>
<feature type="binding site" evidence="1">
    <location>
        <begin position="177"/>
        <end position="184"/>
    </location>
    <ligand>
        <name>ATP</name>
        <dbReference type="ChEBI" id="CHEBI:30616"/>
    </ligand>
</feature>
<keyword id="KW-0010">Activator</keyword>
<keyword id="KW-0067">ATP-binding</keyword>
<keyword id="KW-0238">DNA-binding</keyword>
<keyword id="KW-0347">Helicase</keyword>
<keyword id="KW-0378">Hydrolase</keyword>
<keyword id="KW-0547">Nucleotide-binding</keyword>
<keyword id="KW-0804">Transcription</keyword>
<keyword id="KW-0805">Transcription regulation</keyword>
<reference key="1">
    <citation type="journal article" date="2009" name="PLoS ONE">
        <title>Salmonella paratyphi C: genetic divergence from Salmonella choleraesuis and pathogenic convergence with Salmonella typhi.</title>
        <authorList>
            <person name="Liu W.-Q."/>
            <person name="Feng Y."/>
            <person name="Wang Y."/>
            <person name="Zou Q.-H."/>
            <person name="Chen F."/>
            <person name="Guo J.-T."/>
            <person name="Peng Y.-H."/>
            <person name="Jin Y."/>
            <person name="Li Y.-G."/>
            <person name="Hu S.-N."/>
            <person name="Johnston R.N."/>
            <person name="Liu G.-R."/>
            <person name="Liu S.-L."/>
        </authorList>
    </citation>
    <scope>NUCLEOTIDE SEQUENCE [LARGE SCALE GENOMIC DNA]</scope>
    <source>
        <strain>RKS4594</strain>
    </source>
</reference>
<sequence length="968" mass="109869">MPFTLGQRWISDTESELGLGTVVAMDARTVTLLFPSTGENRLYARSDSPVTRVMFNPGDTITSHEGWQLHIDEVKEENGLLVYVGTRLDTEETNVTLREVLLDSKLVFSKPQDRLFAGQIDRMDRFALRYRARKFQSEQYRMPYSGLRGQRTNLIPHQLNIAHDVGRRHAPRVLLADEVGLGKTIEAGMILHQQLLSGAAERVLIIVPETLQHQWLVEMLRRFNLRFALFDDERYTEAQHDAYNPFETEQLVICSLDFARRNKQRLEHLCDAEWDLLVVDEAHHLVWSTDAPSREYMAIEQLAERVPGVLLLTATPEQLGMESHFARLRLLDPNRFHDFEQFVEEQKNYRPVADAVAMLLAGNKLSNDELNRLGDLIGEQDIEPLLQAANSDRDDAQAARDELVSMLMDRHGTSRVLFRNTRNGVKGFPKRELHTVKLPLPTQYQTAIKVSGIMGARKSAEDRARDMLYPEQIYQEFEGDTGTWWNFDPRVEWLMGYLTSHRSQKVLVICTKATTALQLEQVLREREGIRAAVFHEGMSIIERDRAAAWFAEEDTGAQVLLCSEIGSEGRNFQFASNLVMFDLPFNPDLLEQRIGRLDRIGQAHDIQIHVPYLEKTAQSVLVRWYHEGLDAFEHTCPTGRAIYDSAYASLINYLAAPEETDGFDDLIKSCREQHEALKAQLEQGRDRLLEIHSNGGEKAQQLAQSIEEQDDDTNLIAFAMNLFDIVGINQDDRGDNLIVLTPSDHMLVPDFPGLPEDGCTITFERDVALSREDAQFITWEHPLIRNGLDLILSGDTGSSTISLLKNKALPVGTLLVELVYVVEAQAPKQLQLNRFLPPTPVRMLLDKNGNNLAAQVEFETFNRQLSAVNRHTGSKLVNAVQQDVHAILQLGETQIEKSARALIDNARREADEKLSGELSRLEALRAVNPNIRDDELAAIDSNRQQVLESLNQAGWRLDALRLIVVTHQ</sequence>
<accession>C0Q5F4</accession>
<evidence type="ECO:0000255" key="1">
    <source>
        <dbReference type="HAMAP-Rule" id="MF_01821"/>
    </source>
</evidence>
<organism>
    <name type="scientific">Salmonella paratyphi C (strain RKS4594)</name>
    <dbReference type="NCBI Taxonomy" id="476213"/>
    <lineage>
        <taxon>Bacteria</taxon>
        <taxon>Pseudomonadati</taxon>
        <taxon>Pseudomonadota</taxon>
        <taxon>Gammaproteobacteria</taxon>
        <taxon>Enterobacterales</taxon>
        <taxon>Enterobacteriaceae</taxon>
        <taxon>Salmonella</taxon>
    </lineage>
</organism>
<protein>
    <recommendedName>
        <fullName evidence="1">RNA polymerase-associated protein RapA</fullName>
        <ecNumber evidence="1">3.6.4.-</ecNumber>
    </recommendedName>
    <alternativeName>
        <fullName evidence="1">ATP-dependent helicase HepA</fullName>
    </alternativeName>
</protein>
<comment type="function">
    <text evidence="1">Transcription regulator that activates transcription by stimulating RNA polymerase (RNAP) recycling in case of stress conditions such as supercoiled DNA or high salt concentrations. Probably acts by releasing the RNAP, when it is trapped or immobilized on tightly supercoiled DNA. Does not activate transcription on linear DNA. Probably not involved in DNA repair.</text>
</comment>
<comment type="subunit">
    <text evidence="1">Interacts with the RNAP. Has a higher affinity for the core RNAP than for the holoenzyme. Its ATPase activity is stimulated by binding to RNAP.</text>
</comment>
<comment type="similarity">
    <text evidence="1">Belongs to the SNF2/RAD54 helicase family. RapA subfamily.</text>
</comment>
<proteinExistence type="inferred from homology"/>
<name>RAPA_SALPC</name>
<dbReference type="EC" id="3.6.4.-" evidence="1"/>
<dbReference type="EMBL" id="CP000857">
    <property type="protein sequence ID" value="ACN44296.1"/>
    <property type="molecule type" value="Genomic_DNA"/>
</dbReference>
<dbReference type="RefSeq" id="WP_001116974.1">
    <property type="nucleotide sequence ID" value="NC_012125.1"/>
</dbReference>
<dbReference type="SMR" id="C0Q5F4"/>
<dbReference type="KEGG" id="sei:SPC_0104"/>
<dbReference type="HOGENOM" id="CLU_011520_0_0_6"/>
<dbReference type="Proteomes" id="UP000001599">
    <property type="component" value="Chromosome"/>
</dbReference>
<dbReference type="GO" id="GO:0005524">
    <property type="term" value="F:ATP binding"/>
    <property type="evidence" value="ECO:0007669"/>
    <property type="project" value="UniProtKB-UniRule"/>
</dbReference>
<dbReference type="GO" id="GO:0003677">
    <property type="term" value="F:DNA binding"/>
    <property type="evidence" value="ECO:0007669"/>
    <property type="project" value="UniProtKB-KW"/>
</dbReference>
<dbReference type="GO" id="GO:0004386">
    <property type="term" value="F:helicase activity"/>
    <property type="evidence" value="ECO:0007669"/>
    <property type="project" value="UniProtKB-UniRule"/>
</dbReference>
<dbReference type="GO" id="GO:0016817">
    <property type="term" value="F:hydrolase activity, acting on acid anhydrides"/>
    <property type="evidence" value="ECO:0007669"/>
    <property type="project" value="InterPro"/>
</dbReference>
<dbReference type="GO" id="GO:0006355">
    <property type="term" value="P:regulation of DNA-templated transcription"/>
    <property type="evidence" value="ECO:0007669"/>
    <property type="project" value="UniProtKB-UniRule"/>
</dbReference>
<dbReference type="CDD" id="cd18011">
    <property type="entry name" value="DEXDc_RapA"/>
    <property type="match status" value="1"/>
</dbReference>
<dbReference type="CDD" id="cd18793">
    <property type="entry name" value="SF2_C_SNF"/>
    <property type="match status" value="1"/>
</dbReference>
<dbReference type="FunFam" id="2.30.30.140:FF:000020">
    <property type="entry name" value="RNA polymerase-associated protein RapA"/>
    <property type="match status" value="1"/>
</dbReference>
<dbReference type="FunFam" id="3.30.360.80:FF:000001">
    <property type="entry name" value="RNA polymerase-associated protein RapA"/>
    <property type="match status" value="1"/>
</dbReference>
<dbReference type="FunFam" id="3.40.50.10810:FF:000012">
    <property type="entry name" value="RNA polymerase-associated protein RapA"/>
    <property type="match status" value="1"/>
</dbReference>
<dbReference type="FunFam" id="3.40.50.300:FF:000350">
    <property type="entry name" value="RNA polymerase-associated protein RapA"/>
    <property type="match status" value="1"/>
</dbReference>
<dbReference type="Gene3D" id="2.30.30.140">
    <property type="match status" value="1"/>
</dbReference>
<dbReference type="Gene3D" id="2.30.30.930">
    <property type="match status" value="1"/>
</dbReference>
<dbReference type="Gene3D" id="3.30.360.80">
    <property type="match status" value="1"/>
</dbReference>
<dbReference type="Gene3D" id="6.10.140.1500">
    <property type="match status" value="1"/>
</dbReference>
<dbReference type="Gene3D" id="6.10.140.2230">
    <property type="match status" value="1"/>
</dbReference>
<dbReference type="Gene3D" id="3.40.50.300">
    <property type="entry name" value="P-loop containing nucleotide triphosphate hydrolases"/>
    <property type="match status" value="1"/>
</dbReference>
<dbReference type="Gene3D" id="3.40.50.10810">
    <property type="entry name" value="Tandem AAA-ATPase domain"/>
    <property type="match status" value="1"/>
</dbReference>
<dbReference type="HAMAP" id="MF_01821">
    <property type="entry name" value="Helicase_RapA"/>
    <property type="match status" value="1"/>
</dbReference>
<dbReference type="InterPro" id="IPR014001">
    <property type="entry name" value="Helicase_ATP-bd"/>
</dbReference>
<dbReference type="InterPro" id="IPR001650">
    <property type="entry name" value="Helicase_C-like"/>
</dbReference>
<dbReference type="InterPro" id="IPR023949">
    <property type="entry name" value="Helicase_RapA"/>
</dbReference>
<dbReference type="InterPro" id="IPR027417">
    <property type="entry name" value="P-loop_NTPase"/>
</dbReference>
<dbReference type="InterPro" id="IPR022737">
    <property type="entry name" value="RapA_C"/>
</dbReference>
<dbReference type="InterPro" id="IPR038718">
    <property type="entry name" value="SNF2-like_sf"/>
</dbReference>
<dbReference type="InterPro" id="IPR049730">
    <property type="entry name" value="SNF2/RAD54-like_C"/>
</dbReference>
<dbReference type="InterPro" id="IPR000330">
    <property type="entry name" value="SNF2_N"/>
</dbReference>
<dbReference type="InterPro" id="IPR040765">
    <property type="entry name" value="Tudor_1_RapA"/>
</dbReference>
<dbReference type="InterPro" id="IPR040766">
    <property type="entry name" value="Tudor_2_RapA"/>
</dbReference>
<dbReference type="NCBIfam" id="NF003426">
    <property type="entry name" value="PRK04914.1"/>
    <property type="match status" value="1"/>
</dbReference>
<dbReference type="PANTHER" id="PTHR45766">
    <property type="entry name" value="DNA ANNEALING HELICASE AND ENDONUCLEASE ZRANB3 FAMILY MEMBER"/>
    <property type="match status" value="1"/>
</dbReference>
<dbReference type="PANTHER" id="PTHR45766:SF6">
    <property type="entry name" value="SWI_SNF-RELATED MATRIX-ASSOCIATED ACTIN-DEPENDENT REGULATOR OF CHROMATIN SUBFAMILY A-LIKE PROTEIN 1"/>
    <property type="match status" value="1"/>
</dbReference>
<dbReference type="Pfam" id="PF00271">
    <property type="entry name" value="Helicase_C"/>
    <property type="match status" value="1"/>
</dbReference>
<dbReference type="Pfam" id="PF12137">
    <property type="entry name" value="RapA_C"/>
    <property type="match status" value="1"/>
</dbReference>
<dbReference type="Pfam" id="PF00176">
    <property type="entry name" value="SNF2-rel_dom"/>
    <property type="match status" value="1"/>
</dbReference>
<dbReference type="Pfam" id="PF18339">
    <property type="entry name" value="Tudor_1_RapA"/>
    <property type="match status" value="1"/>
</dbReference>
<dbReference type="Pfam" id="PF18337">
    <property type="entry name" value="Tudor_RapA"/>
    <property type="match status" value="1"/>
</dbReference>
<dbReference type="SMART" id="SM00487">
    <property type="entry name" value="DEXDc"/>
    <property type="match status" value="1"/>
</dbReference>
<dbReference type="SMART" id="SM00490">
    <property type="entry name" value="HELICc"/>
    <property type="match status" value="1"/>
</dbReference>
<dbReference type="SUPFAM" id="SSF52540">
    <property type="entry name" value="P-loop containing nucleoside triphosphate hydrolases"/>
    <property type="match status" value="2"/>
</dbReference>
<dbReference type="PROSITE" id="PS51192">
    <property type="entry name" value="HELICASE_ATP_BIND_1"/>
    <property type="match status" value="1"/>
</dbReference>
<dbReference type="PROSITE" id="PS51194">
    <property type="entry name" value="HELICASE_CTER"/>
    <property type="match status" value="1"/>
</dbReference>
<gene>
    <name evidence="1" type="primary">rapA</name>
    <name type="ordered locus">SPC_0104</name>
</gene>